<keyword id="KW-0030">Aminoacyl-tRNA synthetase</keyword>
<keyword id="KW-0067">ATP-binding</keyword>
<keyword id="KW-0963">Cytoplasm</keyword>
<keyword id="KW-0436">Ligase</keyword>
<keyword id="KW-0547">Nucleotide-binding</keyword>
<keyword id="KW-0648">Protein biosynthesis</keyword>
<protein>
    <recommendedName>
        <fullName evidence="1">Arginine--tRNA ligase</fullName>
        <ecNumber evidence="1">6.1.1.19</ecNumber>
    </recommendedName>
    <alternativeName>
        <fullName evidence="1">Arginyl-tRNA synthetase</fullName>
        <shortName evidence="1">ArgRS</shortName>
    </alternativeName>
</protein>
<sequence length="556" mass="62750">MNVMQENQIKLIAHIKQAVVQAVGLEEAEVPEILLEVPKDKKHGDYSTNIAMQLARVAKKAPRQIAESIVPELKKDNKLIKEVEIAGPGFINFYLDNAYLTDLVPVILTEDKQYGESDFGKGEKFQIEFVSANPTGDLHLGHARGAAIGDSLANIMKMAGFDVSREYYINDAGNQINNLVLSAEARYFEALGLDSEFPEDGYRGADIISLGKDLAAKYGDKYVHTSEEERRSVFRVDALAFETGKLRADLEEFRVSFDEWFSETSLYEENKVLPALERLRENGYIYEQDGATWLRTTDFEDDKDRVLIKSDGSYTYFLPDIAYHLNKLERGFDVLIDIWGADHHGYIPRMRAAIEALGYSPNQLEVEIIQLVHLFEDGVQVKMSKRTGKSVTMRDLIEEVGLDATRYFFAMRSSDTHMNFDMSLAKSTSNDNPVYYVQYAHARISSILRSGKEQGLEVTKDADMSLLQTEAEYDLLKVLGEFADVVAEAATKRAPHRIVRYLNDLASAFHRFYNSNKVLDMDNLEVTKARLALIKTAQITLRNGLTLLGVSAPEKM</sequence>
<comment type="catalytic activity">
    <reaction evidence="1">
        <text>tRNA(Arg) + L-arginine + ATP = L-arginyl-tRNA(Arg) + AMP + diphosphate</text>
        <dbReference type="Rhea" id="RHEA:20301"/>
        <dbReference type="Rhea" id="RHEA-COMP:9658"/>
        <dbReference type="Rhea" id="RHEA-COMP:9673"/>
        <dbReference type="ChEBI" id="CHEBI:30616"/>
        <dbReference type="ChEBI" id="CHEBI:32682"/>
        <dbReference type="ChEBI" id="CHEBI:33019"/>
        <dbReference type="ChEBI" id="CHEBI:78442"/>
        <dbReference type="ChEBI" id="CHEBI:78513"/>
        <dbReference type="ChEBI" id="CHEBI:456215"/>
        <dbReference type="EC" id="6.1.1.19"/>
    </reaction>
</comment>
<comment type="subunit">
    <text evidence="1">Monomer.</text>
</comment>
<comment type="subcellular location">
    <subcellularLocation>
        <location evidence="1">Cytoplasm</location>
    </subcellularLocation>
</comment>
<comment type="similarity">
    <text evidence="1">Belongs to the class-I aminoacyl-tRNA synthetase family.</text>
</comment>
<evidence type="ECO:0000255" key="1">
    <source>
        <dbReference type="HAMAP-Rule" id="MF_00123"/>
    </source>
</evidence>
<name>SYR_LISMH</name>
<feature type="chain" id="PRO_1000198918" description="Arginine--tRNA ligase">
    <location>
        <begin position="1"/>
        <end position="556"/>
    </location>
</feature>
<feature type="short sequence motif" description="'HIGH' region">
    <location>
        <begin position="132"/>
        <end position="142"/>
    </location>
</feature>
<gene>
    <name evidence="1" type="primary">argS</name>
    <name type="ordered locus">LMHCC_0035</name>
</gene>
<proteinExistence type="inferred from homology"/>
<organism>
    <name type="scientific">Listeria monocytogenes serotype 4a (strain HCC23)</name>
    <dbReference type="NCBI Taxonomy" id="552536"/>
    <lineage>
        <taxon>Bacteria</taxon>
        <taxon>Bacillati</taxon>
        <taxon>Bacillota</taxon>
        <taxon>Bacilli</taxon>
        <taxon>Bacillales</taxon>
        <taxon>Listeriaceae</taxon>
        <taxon>Listeria</taxon>
    </lineage>
</organism>
<dbReference type="EC" id="6.1.1.19" evidence="1"/>
<dbReference type="EMBL" id="CP001175">
    <property type="protein sequence ID" value="ACK38399.1"/>
    <property type="molecule type" value="Genomic_DNA"/>
</dbReference>
<dbReference type="RefSeq" id="WP_012580731.1">
    <property type="nucleotide sequence ID" value="NC_011660.1"/>
</dbReference>
<dbReference type="SMR" id="B8DBE8"/>
<dbReference type="KEGG" id="lmh:LMHCC_0035"/>
<dbReference type="HOGENOM" id="CLU_006406_0_1_9"/>
<dbReference type="GO" id="GO:0005737">
    <property type="term" value="C:cytoplasm"/>
    <property type="evidence" value="ECO:0007669"/>
    <property type="project" value="UniProtKB-SubCell"/>
</dbReference>
<dbReference type="GO" id="GO:0004814">
    <property type="term" value="F:arginine-tRNA ligase activity"/>
    <property type="evidence" value="ECO:0007669"/>
    <property type="project" value="UniProtKB-UniRule"/>
</dbReference>
<dbReference type="GO" id="GO:0005524">
    <property type="term" value="F:ATP binding"/>
    <property type="evidence" value="ECO:0007669"/>
    <property type="project" value="UniProtKB-UniRule"/>
</dbReference>
<dbReference type="GO" id="GO:0006420">
    <property type="term" value="P:arginyl-tRNA aminoacylation"/>
    <property type="evidence" value="ECO:0007669"/>
    <property type="project" value="UniProtKB-UniRule"/>
</dbReference>
<dbReference type="CDD" id="cd07956">
    <property type="entry name" value="Anticodon_Ia_Arg"/>
    <property type="match status" value="1"/>
</dbReference>
<dbReference type="CDD" id="cd00671">
    <property type="entry name" value="ArgRS_core"/>
    <property type="match status" value="1"/>
</dbReference>
<dbReference type="FunFam" id="1.10.730.10:FF:000008">
    <property type="entry name" value="Arginine--tRNA ligase"/>
    <property type="match status" value="1"/>
</dbReference>
<dbReference type="FunFam" id="3.30.1360.70:FF:000003">
    <property type="entry name" value="Arginine--tRNA ligase"/>
    <property type="match status" value="1"/>
</dbReference>
<dbReference type="FunFam" id="3.40.50.620:FF:000062">
    <property type="entry name" value="Arginine--tRNA ligase"/>
    <property type="match status" value="1"/>
</dbReference>
<dbReference type="Gene3D" id="3.30.1360.70">
    <property type="entry name" value="Arginyl tRNA synthetase N-terminal domain"/>
    <property type="match status" value="1"/>
</dbReference>
<dbReference type="Gene3D" id="3.40.50.620">
    <property type="entry name" value="HUPs"/>
    <property type="match status" value="1"/>
</dbReference>
<dbReference type="Gene3D" id="1.10.730.10">
    <property type="entry name" value="Isoleucyl-tRNA Synthetase, Domain 1"/>
    <property type="match status" value="1"/>
</dbReference>
<dbReference type="HAMAP" id="MF_00123">
    <property type="entry name" value="Arg_tRNA_synth"/>
    <property type="match status" value="1"/>
</dbReference>
<dbReference type="InterPro" id="IPR001412">
    <property type="entry name" value="aa-tRNA-synth_I_CS"/>
</dbReference>
<dbReference type="InterPro" id="IPR001278">
    <property type="entry name" value="Arg-tRNA-ligase"/>
</dbReference>
<dbReference type="InterPro" id="IPR005148">
    <property type="entry name" value="Arg-tRNA-synth_N"/>
</dbReference>
<dbReference type="InterPro" id="IPR036695">
    <property type="entry name" value="Arg-tRNA-synth_N_sf"/>
</dbReference>
<dbReference type="InterPro" id="IPR035684">
    <property type="entry name" value="ArgRS_core"/>
</dbReference>
<dbReference type="InterPro" id="IPR008909">
    <property type="entry name" value="DALR_anticod-bd"/>
</dbReference>
<dbReference type="InterPro" id="IPR014729">
    <property type="entry name" value="Rossmann-like_a/b/a_fold"/>
</dbReference>
<dbReference type="InterPro" id="IPR009080">
    <property type="entry name" value="tRNAsynth_Ia_anticodon-bd"/>
</dbReference>
<dbReference type="NCBIfam" id="TIGR00456">
    <property type="entry name" value="argS"/>
    <property type="match status" value="1"/>
</dbReference>
<dbReference type="PANTHER" id="PTHR11956:SF5">
    <property type="entry name" value="ARGININE--TRNA LIGASE, CYTOPLASMIC"/>
    <property type="match status" value="1"/>
</dbReference>
<dbReference type="PANTHER" id="PTHR11956">
    <property type="entry name" value="ARGINYL-TRNA SYNTHETASE"/>
    <property type="match status" value="1"/>
</dbReference>
<dbReference type="Pfam" id="PF03485">
    <property type="entry name" value="Arg_tRNA_synt_N"/>
    <property type="match status" value="1"/>
</dbReference>
<dbReference type="Pfam" id="PF05746">
    <property type="entry name" value="DALR_1"/>
    <property type="match status" value="1"/>
</dbReference>
<dbReference type="Pfam" id="PF00750">
    <property type="entry name" value="tRNA-synt_1d"/>
    <property type="match status" value="1"/>
</dbReference>
<dbReference type="PRINTS" id="PR01038">
    <property type="entry name" value="TRNASYNTHARG"/>
</dbReference>
<dbReference type="SMART" id="SM01016">
    <property type="entry name" value="Arg_tRNA_synt_N"/>
    <property type="match status" value="1"/>
</dbReference>
<dbReference type="SMART" id="SM00836">
    <property type="entry name" value="DALR_1"/>
    <property type="match status" value="1"/>
</dbReference>
<dbReference type="SUPFAM" id="SSF47323">
    <property type="entry name" value="Anticodon-binding domain of a subclass of class I aminoacyl-tRNA synthetases"/>
    <property type="match status" value="1"/>
</dbReference>
<dbReference type="SUPFAM" id="SSF55190">
    <property type="entry name" value="Arginyl-tRNA synthetase (ArgRS), N-terminal 'additional' domain"/>
    <property type="match status" value="1"/>
</dbReference>
<dbReference type="SUPFAM" id="SSF52374">
    <property type="entry name" value="Nucleotidylyl transferase"/>
    <property type="match status" value="1"/>
</dbReference>
<dbReference type="PROSITE" id="PS00178">
    <property type="entry name" value="AA_TRNA_LIGASE_I"/>
    <property type="match status" value="1"/>
</dbReference>
<reference key="1">
    <citation type="journal article" date="2011" name="J. Bacteriol.">
        <title>Genome sequence of lineage III Listeria monocytogenes strain HCC23.</title>
        <authorList>
            <person name="Steele C.L."/>
            <person name="Donaldson J.R."/>
            <person name="Paul D."/>
            <person name="Banes M.M."/>
            <person name="Arick T."/>
            <person name="Bridges S.M."/>
            <person name="Lawrence M.L."/>
        </authorList>
    </citation>
    <scope>NUCLEOTIDE SEQUENCE [LARGE SCALE GENOMIC DNA]</scope>
    <source>
        <strain>HCC23</strain>
    </source>
</reference>
<accession>B8DBE8</accession>